<dbReference type="EC" id="1.5.1.6" evidence="7 9"/>
<dbReference type="EMBL" id="AF052732">
    <property type="protein sequence ID" value="AAC35000.1"/>
    <property type="molecule type" value="mRNA"/>
</dbReference>
<dbReference type="EMBL" id="AK294392">
    <property type="protein sequence ID" value="BAG57647.1"/>
    <property type="molecule type" value="mRNA"/>
</dbReference>
<dbReference type="EMBL" id="CR749807">
    <property type="protein sequence ID" value="CAH18667.1"/>
    <property type="molecule type" value="mRNA"/>
</dbReference>
<dbReference type="EMBL" id="AC079848">
    <property type="status" value="NOT_ANNOTATED_CDS"/>
    <property type="molecule type" value="Genomic_DNA"/>
</dbReference>
<dbReference type="EMBL" id="CH471052">
    <property type="protein sequence ID" value="EAW79370.1"/>
    <property type="molecule type" value="Genomic_DNA"/>
</dbReference>
<dbReference type="EMBL" id="BC027241">
    <property type="protein sequence ID" value="AAH27241.1"/>
    <property type="molecule type" value="mRNA"/>
</dbReference>
<dbReference type="CCDS" id="CCDS3034.1">
    <molecule id="O75891-1"/>
</dbReference>
<dbReference type="CCDS" id="CCDS58850.1">
    <molecule id="O75891-2"/>
</dbReference>
<dbReference type="CCDS" id="CCDS58851.1">
    <molecule id="O75891-3"/>
</dbReference>
<dbReference type="RefSeq" id="NP_001257293.1">
    <molecule id="O75891-3"/>
    <property type="nucleotide sequence ID" value="NM_001270364.2"/>
</dbReference>
<dbReference type="RefSeq" id="NP_001257294.1">
    <molecule id="O75891-2"/>
    <property type="nucleotide sequence ID" value="NM_001270365.2"/>
</dbReference>
<dbReference type="RefSeq" id="NP_036322.2">
    <molecule id="O75891-1"/>
    <property type="nucleotide sequence ID" value="NM_012190.3"/>
</dbReference>
<dbReference type="RefSeq" id="XP_006713544.1">
    <molecule id="O75891-1"/>
    <property type="nucleotide sequence ID" value="XM_006713481.4"/>
</dbReference>
<dbReference type="RefSeq" id="XP_011510657.1">
    <molecule id="O75891-1"/>
    <property type="nucleotide sequence ID" value="XM_011512355.2"/>
</dbReference>
<dbReference type="RefSeq" id="XP_024309093.1">
    <molecule id="O75891-1"/>
    <property type="nucleotide sequence ID" value="XM_024453325.2"/>
</dbReference>
<dbReference type="RefSeq" id="XP_054201003.1">
    <molecule id="O75891-1"/>
    <property type="nucleotide sequence ID" value="XM_054345028.1"/>
</dbReference>
<dbReference type="RefSeq" id="XP_054201004.1">
    <molecule id="O75891-1"/>
    <property type="nucleotide sequence ID" value="XM_054345029.1"/>
</dbReference>
<dbReference type="RefSeq" id="XP_054201005.1">
    <molecule id="O75891-1"/>
    <property type="nucleotide sequence ID" value="XM_054345030.1"/>
</dbReference>
<dbReference type="PDB" id="2BW0">
    <property type="method" value="X-ray"/>
    <property type="resolution" value="1.70 A"/>
    <property type="chains" value="A=1-307"/>
</dbReference>
<dbReference type="PDB" id="2CFI">
    <property type="method" value="X-ray"/>
    <property type="resolution" value="1.85 A"/>
    <property type="chains" value="A=1-307"/>
</dbReference>
<dbReference type="PDB" id="2CQ8">
    <property type="method" value="NMR"/>
    <property type="chains" value="A=305-401"/>
</dbReference>
<dbReference type="PDB" id="7YJJ">
    <property type="method" value="EM"/>
    <property type="resolution" value="6.31 A"/>
    <property type="chains" value="B/C/D/E=405-902"/>
</dbReference>
<dbReference type="PDBsum" id="2BW0"/>
<dbReference type="PDBsum" id="2CFI"/>
<dbReference type="PDBsum" id="2CQ8"/>
<dbReference type="PDBsum" id="7YJJ"/>
<dbReference type="EMDB" id="EMD-33872"/>
<dbReference type="SMR" id="O75891"/>
<dbReference type="BioGRID" id="116052">
    <property type="interactions" value="38"/>
</dbReference>
<dbReference type="FunCoup" id="O75891">
    <property type="interactions" value="498"/>
</dbReference>
<dbReference type="IntAct" id="O75891">
    <property type="interactions" value="85"/>
</dbReference>
<dbReference type="MINT" id="O75891"/>
<dbReference type="STRING" id="9606.ENSP00000273450"/>
<dbReference type="DrugBank" id="DB00116">
    <property type="generic name" value="Tetrahydrofolic acid"/>
</dbReference>
<dbReference type="iPTMnet" id="O75891"/>
<dbReference type="PhosphoSitePlus" id="O75891"/>
<dbReference type="SwissPalm" id="O75891"/>
<dbReference type="BioMuta" id="ALDH1L1"/>
<dbReference type="jPOST" id="O75891"/>
<dbReference type="MassIVE" id="O75891"/>
<dbReference type="PaxDb" id="9606-ENSP00000273450"/>
<dbReference type="PeptideAtlas" id="O75891"/>
<dbReference type="ProteomicsDB" id="19312"/>
<dbReference type="ProteomicsDB" id="50249">
    <molecule id="O75891-1"/>
</dbReference>
<dbReference type="ProteomicsDB" id="74038"/>
<dbReference type="Pumba" id="O75891"/>
<dbReference type="ABCD" id="O75891">
    <property type="antibodies" value="1 sequenced antibody"/>
</dbReference>
<dbReference type="Antibodypedia" id="33051">
    <property type="antibodies" value="589 antibodies from 36 providers"/>
</dbReference>
<dbReference type="DNASU" id="10840"/>
<dbReference type="Ensembl" id="ENST00000273450.7">
    <molecule id="O75891-3"/>
    <property type="protein sequence ID" value="ENSP00000273450.3"/>
    <property type="gene ID" value="ENSG00000144908.14"/>
</dbReference>
<dbReference type="Ensembl" id="ENST00000393431.6">
    <molecule id="O75891-4"/>
    <property type="protein sequence ID" value="ENSP00000377081.2"/>
    <property type="gene ID" value="ENSG00000144908.14"/>
</dbReference>
<dbReference type="Ensembl" id="ENST00000393434.7">
    <molecule id="O75891-1"/>
    <property type="protein sequence ID" value="ENSP00000377083.3"/>
    <property type="gene ID" value="ENSG00000144908.14"/>
</dbReference>
<dbReference type="Ensembl" id="ENST00000452905.6">
    <molecule id="O75891-2"/>
    <property type="protein sequence ID" value="ENSP00000395881.2"/>
    <property type="gene ID" value="ENSG00000144908.14"/>
</dbReference>
<dbReference type="Ensembl" id="ENST00000455064.6">
    <molecule id="O75891-4"/>
    <property type="protein sequence ID" value="ENSP00000414126.3"/>
    <property type="gene ID" value="ENSG00000144908.14"/>
</dbReference>
<dbReference type="Ensembl" id="ENST00000472186.5">
    <molecule id="O75891-1"/>
    <property type="protein sequence ID" value="ENSP00000420293.1"/>
    <property type="gene ID" value="ENSG00000144908.14"/>
</dbReference>
<dbReference type="GeneID" id="10840"/>
<dbReference type="KEGG" id="hsa:10840"/>
<dbReference type="MANE-Select" id="ENST00000393434.7">
    <property type="protein sequence ID" value="ENSP00000377083.3"/>
    <property type="RefSeq nucleotide sequence ID" value="NM_012190.4"/>
    <property type="RefSeq protein sequence ID" value="NP_036322.2"/>
</dbReference>
<dbReference type="UCSC" id="uc003eim.3">
    <molecule id="O75891-1"/>
    <property type="organism name" value="human"/>
</dbReference>
<dbReference type="UCSC" id="uc062njt.1">
    <property type="organism name" value="human"/>
</dbReference>
<dbReference type="AGR" id="HGNC:3978"/>
<dbReference type="CTD" id="10840"/>
<dbReference type="DisGeNET" id="10840"/>
<dbReference type="GeneCards" id="ALDH1L1"/>
<dbReference type="HGNC" id="HGNC:3978">
    <property type="gene designation" value="ALDH1L1"/>
</dbReference>
<dbReference type="HPA" id="ENSG00000144908">
    <property type="expression patterns" value="Tissue enhanced (liver)"/>
</dbReference>
<dbReference type="MIM" id="600249">
    <property type="type" value="gene"/>
</dbReference>
<dbReference type="neXtProt" id="NX_O75891"/>
<dbReference type="OpenTargets" id="ENSG00000144908"/>
<dbReference type="PharmGKB" id="PA28393"/>
<dbReference type="VEuPathDB" id="HostDB:ENSG00000144908"/>
<dbReference type="eggNOG" id="KOG2452">
    <property type="taxonomic scope" value="Eukaryota"/>
</dbReference>
<dbReference type="GeneTree" id="ENSGT00940000160913"/>
<dbReference type="HOGENOM" id="CLU_014974_1_0_1"/>
<dbReference type="InParanoid" id="O75891"/>
<dbReference type="OMA" id="FENGVWG"/>
<dbReference type="OrthoDB" id="9521164at2759"/>
<dbReference type="PAN-GO" id="O75891">
    <property type="GO annotations" value="2 GO annotations based on evolutionary models"/>
</dbReference>
<dbReference type="PhylomeDB" id="O75891"/>
<dbReference type="TreeFam" id="TF354242"/>
<dbReference type="BioCyc" id="MetaCyc:HS07217-MONOMER"/>
<dbReference type="BRENDA" id="1.5.1.6">
    <property type="organism ID" value="2681"/>
</dbReference>
<dbReference type="PathwayCommons" id="O75891"/>
<dbReference type="Reactome" id="R-HSA-196757">
    <property type="pathway name" value="Metabolism of folate and pterines"/>
</dbReference>
<dbReference type="SignaLink" id="O75891"/>
<dbReference type="BioGRID-ORCS" id="10840">
    <property type="hits" value="9 hits in 1152 CRISPR screens"/>
</dbReference>
<dbReference type="CD-CODE" id="FB4E32DD">
    <property type="entry name" value="Presynaptic clusters and postsynaptic densities"/>
</dbReference>
<dbReference type="ChiTaRS" id="ALDH1L1">
    <property type="organism name" value="human"/>
</dbReference>
<dbReference type="EvolutionaryTrace" id="O75891"/>
<dbReference type="GeneWiki" id="ALDH1L1"/>
<dbReference type="GenomeRNAi" id="10840"/>
<dbReference type="Pharos" id="O75891">
    <property type="development level" value="Tbio"/>
</dbReference>
<dbReference type="PRO" id="PR:O75891"/>
<dbReference type="Proteomes" id="UP000005640">
    <property type="component" value="Chromosome 3"/>
</dbReference>
<dbReference type="RNAct" id="O75891">
    <property type="molecule type" value="protein"/>
</dbReference>
<dbReference type="Bgee" id="ENSG00000144908">
    <property type="expression patterns" value="Expressed in right lobe of liver and 180 other cell types or tissues"/>
</dbReference>
<dbReference type="ExpressionAtlas" id="O75891">
    <property type="expression patterns" value="baseline and differential"/>
</dbReference>
<dbReference type="GO" id="GO:0005829">
    <property type="term" value="C:cytosol"/>
    <property type="evidence" value="ECO:0000314"/>
    <property type="project" value="HPA"/>
</dbReference>
<dbReference type="GO" id="GO:0070062">
    <property type="term" value="C:extracellular exosome"/>
    <property type="evidence" value="ECO:0007005"/>
    <property type="project" value="UniProtKB"/>
</dbReference>
<dbReference type="GO" id="GO:0005739">
    <property type="term" value="C:mitochondrion"/>
    <property type="evidence" value="ECO:0006056"/>
    <property type="project" value="FlyBase"/>
</dbReference>
<dbReference type="GO" id="GO:0004029">
    <property type="term" value="F:aldehyde dehydrogenase (NAD+) activity"/>
    <property type="evidence" value="ECO:0000318"/>
    <property type="project" value="GO_Central"/>
</dbReference>
<dbReference type="GO" id="GO:0016155">
    <property type="term" value="F:formyltetrahydrofolate dehydrogenase activity"/>
    <property type="evidence" value="ECO:0000314"/>
    <property type="project" value="UniProtKB"/>
</dbReference>
<dbReference type="GO" id="GO:0009258">
    <property type="term" value="P:10-formyltetrahydrofolate catabolic process"/>
    <property type="evidence" value="ECO:0000314"/>
    <property type="project" value="UniProtKB"/>
</dbReference>
<dbReference type="GO" id="GO:0009058">
    <property type="term" value="P:biosynthetic process"/>
    <property type="evidence" value="ECO:0007669"/>
    <property type="project" value="InterPro"/>
</dbReference>
<dbReference type="GO" id="GO:0006740">
    <property type="term" value="P:NADPH regeneration"/>
    <property type="evidence" value="ECO:0000314"/>
    <property type="project" value="UniProtKB"/>
</dbReference>
<dbReference type="GO" id="GO:0035999">
    <property type="term" value="P:tetrahydrofolate interconversion"/>
    <property type="evidence" value="ECO:0007669"/>
    <property type="project" value="Ensembl"/>
</dbReference>
<dbReference type="CDD" id="cd07140">
    <property type="entry name" value="ALDH_F1L_FTFDH"/>
    <property type="match status" value="1"/>
</dbReference>
<dbReference type="CDD" id="cd08703">
    <property type="entry name" value="FDH_Hydrolase_C"/>
    <property type="match status" value="1"/>
</dbReference>
<dbReference type="CDD" id="cd08647">
    <property type="entry name" value="FMT_core_FDH_N"/>
    <property type="match status" value="1"/>
</dbReference>
<dbReference type="FunFam" id="1.10.1200.10:FF:000002">
    <property type="entry name" value="10-formyltetrahydrofolate dehydrogenase"/>
    <property type="match status" value="1"/>
</dbReference>
<dbReference type="FunFam" id="3.10.25.10:FF:000002">
    <property type="entry name" value="10-formyltetrahydrofolate dehydrogenase"/>
    <property type="match status" value="1"/>
</dbReference>
<dbReference type="FunFam" id="3.40.50.170:FF:000002">
    <property type="entry name" value="10-formyltetrahydrofolate dehydrogenase"/>
    <property type="match status" value="1"/>
</dbReference>
<dbReference type="FunFam" id="3.40.605.10:FF:000026">
    <property type="entry name" value="Aldehyde dehydrogenase, putative"/>
    <property type="match status" value="1"/>
</dbReference>
<dbReference type="FunFam" id="3.40.309.10:FF:000008">
    <property type="entry name" value="Cytosolic 10-formyltetrahydrofolate dehydrogenase"/>
    <property type="match status" value="1"/>
</dbReference>
<dbReference type="FunFam" id="3.40.605.10:FF:000009">
    <property type="entry name" value="Cytosolic 10-formyltetrahydrofolate dehydrogenase"/>
    <property type="match status" value="1"/>
</dbReference>
<dbReference type="Gene3D" id="1.10.1200.10">
    <property type="entry name" value="ACP-like"/>
    <property type="match status" value="1"/>
</dbReference>
<dbReference type="Gene3D" id="3.40.605.10">
    <property type="entry name" value="Aldehyde Dehydrogenase, Chain A, domain 1"/>
    <property type="match status" value="1"/>
</dbReference>
<dbReference type="Gene3D" id="3.40.309.10">
    <property type="entry name" value="Aldehyde Dehydrogenase, Chain A, domain 2"/>
    <property type="match status" value="1"/>
</dbReference>
<dbReference type="Gene3D" id="3.10.25.10">
    <property type="entry name" value="Formyl transferase, C-terminal domain"/>
    <property type="match status" value="1"/>
</dbReference>
<dbReference type="Gene3D" id="3.40.50.170">
    <property type="entry name" value="Formyl transferase, N-terminal domain"/>
    <property type="match status" value="1"/>
</dbReference>
<dbReference type="InterPro" id="IPR011407">
    <property type="entry name" value="10_FTHF_DH"/>
</dbReference>
<dbReference type="InterPro" id="IPR036736">
    <property type="entry name" value="ACP-like_sf"/>
</dbReference>
<dbReference type="InterPro" id="IPR016161">
    <property type="entry name" value="Ald_DH/histidinol_DH"/>
</dbReference>
<dbReference type="InterPro" id="IPR016163">
    <property type="entry name" value="Ald_DH_C"/>
</dbReference>
<dbReference type="InterPro" id="IPR016160">
    <property type="entry name" value="Ald_DH_CS_CYS"/>
</dbReference>
<dbReference type="InterPro" id="IPR029510">
    <property type="entry name" value="Ald_DH_CS_GLU"/>
</dbReference>
<dbReference type="InterPro" id="IPR016162">
    <property type="entry name" value="Ald_DH_N"/>
</dbReference>
<dbReference type="InterPro" id="IPR015590">
    <property type="entry name" value="Aldehyde_DH_dom"/>
</dbReference>
<dbReference type="InterPro" id="IPR005793">
    <property type="entry name" value="Formyl_trans_C"/>
</dbReference>
<dbReference type="InterPro" id="IPR037022">
    <property type="entry name" value="Formyl_trans_C_sf"/>
</dbReference>
<dbReference type="InterPro" id="IPR002376">
    <property type="entry name" value="Formyl_transf_N"/>
</dbReference>
<dbReference type="InterPro" id="IPR036477">
    <property type="entry name" value="Formyl_transf_N_sf"/>
</dbReference>
<dbReference type="InterPro" id="IPR011034">
    <property type="entry name" value="Formyl_transferase-like_C_sf"/>
</dbReference>
<dbReference type="InterPro" id="IPR001555">
    <property type="entry name" value="GART_AS"/>
</dbReference>
<dbReference type="InterPro" id="IPR009081">
    <property type="entry name" value="PP-bd_ACP"/>
</dbReference>
<dbReference type="PANTHER" id="PTHR11699">
    <property type="entry name" value="ALDEHYDE DEHYDROGENASE-RELATED"/>
    <property type="match status" value="1"/>
</dbReference>
<dbReference type="Pfam" id="PF00171">
    <property type="entry name" value="Aldedh"/>
    <property type="match status" value="1"/>
</dbReference>
<dbReference type="Pfam" id="PF02911">
    <property type="entry name" value="Formyl_trans_C"/>
    <property type="match status" value="1"/>
</dbReference>
<dbReference type="Pfam" id="PF00551">
    <property type="entry name" value="Formyl_trans_N"/>
    <property type="match status" value="1"/>
</dbReference>
<dbReference type="Pfam" id="PF00550">
    <property type="entry name" value="PP-binding"/>
    <property type="match status" value="1"/>
</dbReference>
<dbReference type="PIRSF" id="PIRSF036489">
    <property type="entry name" value="10-FTHFDH"/>
    <property type="match status" value="1"/>
</dbReference>
<dbReference type="SUPFAM" id="SSF47336">
    <property type="entry name" value="ACP-like"/>
    <property type="match status" value="1"/>
</dbReference>
<dbReference type="SUPFAM" id="SSF53720">
    <property type="entry name" value="ALDH-like"/>
    <property type="match status" value="1"/>
</dbReference>
<dbReference type="SUPFAM" id="SSF50486">
    <property type="entry name" value="FMT C-terminal domain-like"/>
    <property type="match status" value="1"/>
</dbReference>
<dbReference type="SUPFAM" id="SSF53328">
    <property type="entry name" value="Formyltransferase"/>
    <property type="match status" value="1"/>
</dbReference>
<dbReference type="PROSITE" id="PS00070">
    <property type="entry name" value="ALDEHYDE_DEHYDR_CYS"/>
    <property type="match status" value="1"/>
</dbReference>
<dbReference type="PROSITE" id="PS00687">
    <property type="entry name" value="ALDEHYDE_DEHYDR_GLU"/>
    <property type="match status" value="1"/>
</dbReference>
<dbReference type="PROSITE" id="PS50075">
    <property type="entry name" value="CARRIER"/>
    <property type="match status" value="1"/>
</dbReference>
<dbReference type="PROSITE" id="PS00373">
    <property type="entry name" value="GART"/>
    <property type="match status" value="1"/>
</dbReference>
<name>AL1L1_HUMAN</name>
<gene>
    <name evidence="17" type="primary">ALDH1L1</name>
    <name type="synonym">FTHFD</name>
</gene>
<reference key="1">
    <citation type="submission" date="1998-03" db="EMBL/GenBank/DDBJ databases">
        <authorList>
            <person name="Hong M.H."/>
            <person name="Lee Y."/>
            <person name="Kim J.W."/>
            <person name="Kang B.S."/>
            <person name="Choe I.S."/>
        </authorList>
    </citation>
    <scope>NUCLEOTIDE SEQUENCE [MRNA] (ISOFORM 1)</scope>
</reference>
<reference key="2">
    <citation type="journal article" date="2004" name="Nat. Genet.">
        <title>Complete sequencing and characterization of 21,243 full-length human cDNAs.</title>
        <authorList>
            <person name="Ota T."/>
            <person name="Suzuki Y."/>
            <person name="Nishikawa T."/>
            <person name="Otsuki T."/>
            <person name="Sugiyama T."/>
            <person name="Irie R."/>
            <person name="Wakamatsu A."/>
            <person name="Hayashi K."/>
            <person name="Sato H."/>
            <person name="Nagai K."/>
            <person name="Kimura K."/>
            <person name="Makita H."/>
            <person name="Sekine M."/>
            <person name="Obayashi M."/>
            <person name="Nishi T."/>
            <person name="Shibahara T."/>
            <person name="Tanaka T."/>
            <person name="Ishii S."/>
            <person name="Yamamoto J."/>
            <person name="Saito K."/>
            <person name="Kawai Y."/>
            <person name="Isono Y."/>
            <person name="Nakamura Y."/>
            <person name="Nagahari K."/>
            <person name="Murakami K."/>
            <person name="Yasuda T."/>
            <person name="Iwayanagi T."/>
            <person name="Wagatsuma M."/>
            <person name="Shiratori A."/>
            <person name="Sudo H."/>
            <person name="Hosoiri T."/>
            <person name="Kaku Y."/>
            <person name="Kodaira H."/>
            <person name="Kondo H."/>
            <person name="Sugawara M."/>
            <person name="Takahashi M."/>
            <person name="Kanda K."/>
            <person name="Yokoi T."/>
            <person name="Furuya T."/>
            <person name="Kikkawa E."/>
            <person name="Omura Y."/>
            <person name="Abe K."/>
            <person name="Kamihara K."/>
            <person name="Katsuta N."/>
            <person name="Sato K."/>
            <person name="Tanikawa M."/>
            <person name="Yamazaki M."/>
            <person name="Ninomiya K."/>
            <person name="Ishibashi T."/>
            <person name="Yamashita H."/>
            <person name="Murakawa K."/>
            <person name="Fujimori K."/>
            <person name="Tanai H."/>
            <person name="Kimata M."/>
            <person name="Watanabe M."/>
            <person name="Hiraoka S."/>
            <person name="Chiba Y."/>
            <person name="Ishida S."/>
            <person name="Ono Y."/>
            <person name="Takiguchi S."/>
            <person name="Watanabe S."/>
            <person name="Yosida M."/>
            <person name="Hotuta T."/>
            <person name="Kusano J."/>
            <person name="Kanehori K."/>
            <person name="Takahashi-Fujii A."/>
            <person name="Hara H."/>
            <person name="Tanase T.-O."/>
            <person name="Nomura Y."/>
            <person name="Togiya S."/>
            <person name="Komai F."/>
            <person name="Hara R."/>
            <person name="Takeuchi K."/>
            <person name="Arita M."/>
            <person name="Imose N."/>
            <person name="Musashino K."/>
            <person name="Yuuki H."/>
            <person name="Oshima A."/>
            <person name="Sasaki N."/>
            <person name="Aotsuka S."/>
            <person name="Yoshikawa Y."/>
            <person name="Matsunawa H."/>
            <person name="Ichihara T."/>
            <person name="Shiohata N."/>
            <person name="Sano S."/>
            <person name="Moriya S."/>
            <person name="Momiyama H."/>
            <person name="Satoh N."/>
            <person name="Takami S."/>
            <person name="Terashima Y."/>
            <person name="Suzuki O."/>
            <person name="Nakagawa S."/>
            <person name="Senoh A."/>
            <person name="Mizoguchi H."/>
            <person name="Goto Y."/>
            <person name="Shimizu F."/>
            <person name="Wakebe H."/>
            <person name="Hishigaki H."/>
            <person name="Watanabe T."/>
            <person name="Sugiyama A."/>
            <person name="Takemoto M."/>
            <person name="Kawakami B."/>
            <person name="Yamazaki M."/>
            <person name="Watanabe K."/>
            <person name="Kumagai A."/>
            <person name="Itakura S."/>
            <person name="Fukuzumi Y."/>
            <person name="Fujimori Y."/>
            <person name="Komiyama M."/>
            <person name="Tashiro H."/>
            <person name="Tanigami A."/>
            <person name="Fujiwara T."/>
            <person name="Ono T."/>
            <person name="Yamada K."/>
            <person name="Fujii Y."/>
            <person name="Ozaki K."/>
            <person name="Hirao M."/>
            <person name="Ohmori Y."/>
            <person name="Kawabata A."/>
            <person name="Hikiji T."/>
            <person name="Kobatake N."/>
            <person name="Inagaki H."/>
            <person name="Ikema Y."/>
            <person name="Okamoto S."/>
            <person name="Okitani R."/>
            <person name="Kawakami T."/>
            <person name="Noguchi S."/>
            <person name="Itoh T."/>
            <person name="Shigeta K."/>
            <person name="Senba T."/>
            <person name="Matsumura K."/>
            <person name="Nakajima Y."/>
            <person name="Mizuno T."/>
            <person name="Morinaga M."/>
            <person name="Sasaki M."/>
            <person name="Togashi T."/>
            <person name="Oyama M."/>
            <person name="Hata H."/>
            <person name="Watanabe M."/>
            <person name="Komatsu T."/>
            <person name="Mizushima-Sugano J."/>
            <person name="Satoh T."/>
            <person name="Shirai Y."/>
            <person name="Takahashi Y."/>
            <person name="Nakagawa K."/>
            <person name="Okumura K."/>
            <person name="Nagase T."/>
            <person name="Nomura N."/>
            <person name="Kikuchi H."/>
            <person name="Masuho Y."/>
            <person name="Yamashita R."/>
            <person name="Nakai K."/>
            <person name="Yada T."/>
            <person name="Nakamura Y."/>
            <person name="Ohara O."/>
            <person name="Isogai T."/>
            <person name="Sugano S."/>
        </authorList>
    </citation>
    <scope>NUCLEOTIDE SEQUENCE [LARGE SCALE MRNA] (ISOFORM 2)</scope>
    <source>
        <tissue>Amygdala</tissue>
    </source>
</reference>
<reference key="3">
    <citation type="journal article" date="2007" name="BMC Genomics">
        <title>The full-ORF clone resource of the German cDNA consortium.</title>
        <authorList>
            <person name="Bechtel S."/>
            <person name="Rosenfelder H."/>
            <person name="Duda A."/>
            <person name="Schmidt C.P."/>
            <person name="Ernst U."/>
            <person name="Wellenreuther R."/>
            <person name="Mehrle A."/>
            <person name="Schuster C."/>
            <person name="Bahr A."/>
            <person name="Bloecker H."/>
            <person name="Heubner D."/>
            <person name="Hoerlein A."/>
            <person name="Michel G."/>
            <person name="Wedler H."/>
            <person name="Koehrer K."/>
            <person name="Ottenwaelder B."/>
            <person name="Poustka A."/>
            <person name="Wiemann S."/>
            <person name="Schupp I."/>
        </authorList>
    </citation>
    <scope>NUCLEOTIDE SEQUENCE [LARGE SCALE MRNA] (ISOFORM 3)</scope>
    <source>
        <tissue>Colon carcinoma</tissue>
    </source>
</reference>
<reference key="4">
    <citation type="journal article" date="2006" name="Nature">
        <title>The DNA sequence, annotation and analysis of human chromosome 3.</title>
        <authorList>
            <person name="Muzny D.M."/>
            <person name="Scherer S.E."/>
            <person name="Kaul R."/>
            <person name="Wang J."/>
            <person name="Yu J."/>
            <person name="Sudbrak R."/>
            <person name="Buhay C.J."/>
            <person name="Chen R."/>
            <person name="Cree A."/>
            <person name="Ding Y."/>
            <person name="Dugan-Rocha S."/>
            <person name="Gill R."/>
            <person name="Gunaratne P."/>
            <person name="Harris R.A."/>
            <person name="Hawes A.C."/>
            <person name="Hernandez J."/>
            <person name="Hodgson A.V."/>
            <person name="Hume J."/>
            <person name="Jackson A."/>
            <person name="Khan Z.M."/>
            <person name="Kovar-Smith C."/>
            <person name="Lewis L.R."/>
            <person name="Lozado R.J."/>
            <person name="Metzker M.L."/>
            <person name="Milosavljevic A."/>
            <person name="Miner G.R."/>
            <person name="Morgan M.B."/>
            <person name="Nazareth L.V."/>
            <person name="Scott G."/>
            <person name="Sodergren E."/>
            <person name="Song X.-Z."/>
            <person name="Steffen D."/>
            <person name="Wei S."/>
            <person name="Wheeler D.A."/>
            <person name="Wright M.W."/>
            <person name="Worley K.C."/>
            <person name="Yuan Y."/>
            <person name="Zhang Z."/>
            <person name="Adams C.Q."/>
            <person name="Ansari-Lari M.A."/>
            <person name="Ayele M."/>
            <person name="Brown M.J."/>
            <person name="Chen G."/>
            <person name="Chen Z."/>
            <person name="Clendenning J."/>
            <person name="Clerc-Blankenburg K.P."/>
            <person name="Chen R."/>
            <person name="Chen Z."/>
            <person name="Davis C."/>
            <person name="Delgado O."/>
            <person name="Dinh H.H."/>
            <person name="Dong W."/>
            <person name="Draper H."/>
            <person name="Ernst S."/>
            <person name="Fu G."/>
            <person name="Gonzalez-Garay M.L."/>
            <person name="Garcia D.K."/>
            <person name="Gillett W."/>
            <person name="Gu J."/>
            <person name="Hao B."/>
            <person name="Haugen E."/>
            <person name="Havlak P."/>
            <person name="He X."/>
            <person name="Hennig S."/>
            <person name="Hu S."/>
            <person name="Huang W."/>
            <person name="Jackson L.R."/>
            <person name="Jacob L.S."/>
            <person name="Kelly S.H."/>
            <person name="Kube M."/>
            <person name="Levy R."/>
            <person name="Li Z."/>
            <person name="Liu B."/>
            <person name="Liu J."/>
            <person name="Liu W."/>
            <person name="Lu J."/>
            <person name="Maheshwari M."/>
            <person name="Nguyen B.-V."/>
            <person name="Okwuonu G.O."/>
            <person name="Palmeiri A."/>
            <person name="Pasternak S."/>
            <person name="Perez L.M."/>
            <person name="Phelps K.A."/>
            <person name="Plopper F.J."/>
            <person name="Qiang B."/>
            <person name="Raymond C."/>
            <person name="Rodriguez R."/>
            <person name="Saenphimmachak C."/>
            <person name="Santibanez J."/>
            <person name="Shen H."/>
            <person name="Shen Y."/>
            <person name="Subramanian S."/>
            <person name="Tabor P.E."/>
            <person name="Verduzco D."/>
            <person name="Waldron L."/>
            <person name="Wang J."/>
            <person name="Wang J."/>
            <person name="Wang Q."/>
            <person name="Williams G.A."/>
            <person name="Wong G.K.-S."/>
            <person name="Yao Z."/>
            <person name="Zhang J."/>
            <person name="Zhang X."/>
            <person name="Zhao G."/>
            <person name="Zhou J."/>
            <person name="Zhou Y."/>
            <person name="Nelson D."/>
            <person name="Lehrach H."/>
            <person name="Reinhardt R."/>
            <person name="Naylor S.L."/>
            <person name="Yang H."/>
            <person name="Olson M."/>
            <person name="Weinstock G."/>
            <person name="Gibbs R.A."/>
        </authorList>
    </citation>
    <scope>NUCLEOTIDE SEQUENCE [LARGE SCALE GENOMIC DNA]</scope>
</reference>
<reference key="5">
    <citation type="submission" date="2005-09" db="EMBL/GenBank/DDBJ databases">
        <authorList>
            <person name="Mural R.J."/>
            <person name="Istrail S."/>
            <person name="Sutton G."/>
            <person name="Florea L."/>
            <person name="Halpern A.L."/>
            <person name="Mobarry C.M."/>
            <person name="Lippert R."/>
            <person name="Walenz B."/>
            <person name="Shatkay H."/>
            <person name="Dew I."/>
            <person name="Miller J.R."/>
            <person name="Flanigan M.J."/>
            <person name="Edwards N.J."/>
            <person name="Bolanos R."/>
            <person name="Fasulo D."/>
            <person name="Halldorsson B.V."/>
            <person name="Hannenhalli S."/>
            <person name="Turner R."/>
            <person name="Yooseph S."/>
            <person name="Lu F."/>
            <person name="Nusskern D.R."/>
            <person name="Shue B.C."/>
            <person name="Zheng X.H."/>
            <person name="Zhong F."/>
            <person name="Delcher A.L."/>
            <person name="Huson D.H."/>
            <person name="Kravitz S.A."/>
            <person name="Mouchard L."/>
            <person name="Reinert K."/>
            <person name="Remington K.A."/>
            <person name="Clark A.G."/>
            <person name="Waterman M.S."/>
            <person name="Eichler E.E."/>
            <person name="Adams M.D."/>
            <person name="Hunkapiller M.W."/>
            <person name="Myers E.W."/>
            <person name="Venter J.C."/>
        </authorList>
    </citation>
    <scope>NUCLEOTIDE SEQUENCE [LARGE SCALE GENOMIC DNA]</scope>
</reference>
<reference key="6">
    <citation type="journal article" date="2004" name="Genome Res.">
        <title>The status, quality, and expansion of the NIH full-length cDNA project: the Mammalian Gene Collection (MGC).</title>
        <authorList>
            <consortium name="The MGC Project Team"/>
        </authorList>
    </citation>
    <scope>NUCLEOTIDE SEQUENCE [LARGE SCALE MRNA] (ISOFORM 4)</scope>
    <source>
        <tissue>Urinary bladder</tissue>
    </source>
</reference>
<reference key="7">
    <citation type="journal article" date="2010" name="J. Biol. Chem.">
        <title>Acyl carrier protein-specific 4'-phosphopantetheinyl transferase activates 10-formyltetrahydrofolate dehydrogenase.</title>
        <authorList>
            <person name="Strickland K.C."/>
            <person name="Hoeferlin L.A."/>
            <person name="Oleinik N.V."/>
            <person name="Krupenko N.I."/>
            <person name="Krupenko S.A."/>
        </authorList>
    </citation>
    <scope>FUNCTION</scope>
    <scope>CATALYTIC ACTIVITY</scope>
    <scope>PHOSPHOPANTETHEINYLATION AT SER-354 BY AASDHPPT</scope>
    <scope>SUBCELLULAR LOCATION</scope>
    <scope>MUTAGENESIS OF SER-354</scope>
    <scope>DOMAIN</scope>
</reference>
<reference key="8">
    <citation type="journal article" date="2011" name="Chem. Biol. Interact.">
        <title>Enzymatic properties of ALDH1L2, a mitochondrial 10-formyltetrahydrofolate dehydrogenase.</title>
        <authorList>
            <person name="Strickland K.C."/>
            <person name="Krupenko N.I."/>
            <person name="Dubard M.E."/>
            <person name="Hu C.J."/>
            <person name="Tsybovsky Y."/>
            <person name="Krupenko S.A."/>
        </authorList>
    </citation>
    <scope>FUNCTION</scope>
    <scope>CATALYTIC ACTIVITY</scope>
</reference>
<reference key="9">
    <citation type="journal article" date="2010" name="J. Biol. Chem.">
        <title>ALDH1L2 is the mitochondrial homolog of 10-formyltetrahydrofolate dehydrogenase.</title>
        <authorList>
            <person name="Krupenko N.I."/>
            <person name="Dubard M.E."/>
            <person name="Strickland K.C."/>
            <person name="Moxley K.M."/>
            <person name="Oleinik N.V."/>
            <person name="Krupenko S.A."/>
        </authorList>
    </citation>
    <scope>TISSUE SPECIFICITY</scope>
</reference>
<reference key="10">
    <citation type="journal article" date="2014" name="J. Proteomics">
        <title>An enzyme assisted RP-RPLC approach for in-depth analysis of human liver phosphoproteome.</title>
        <authorList>
            <person name="Bian Y."/>
            <person name="Song C."/>
            <person name="Cheng K."/>
            <person name="Dong M."/>
            <person name="Wang F."/>
            <person name="Huang J."/>
            <person name="Sun D."/>
            <person name="Wang L."/>
            <person name="Ye M."/>
            <person name="Zou H."/>
        </authorList>
    </citation>
    <scope>PHOSPHORYLATION [LARGE SCALE ANALYSIS] AT SER-9; SER-629; SER-631 AND SER-825</scope>
    <scope>IDENTIFICATION BY MASS SPECTROMETRY [LARGE SCALE ANALYSIS]</scope>
    <source>
        <tissue>Liver</tissue>
    </source>
</reference>
<reference evidence="20" key="11">
    <citation type="submission" date="2005-11" db="PDB data bank">
        <title>Solution structure of RSGI RUH-033, a PP-binding domain of 10-FTHFDH from human cDNA.</title>
        <authorList>
            <consortium name="RIKEN structural genomics initiative (RSGI)"/>
        </authorList>
    </citation>
    <scope>STRUCTURE BY NMR OF 303-405</scope>
</reference>
<reference evidence="18 19" key="12">
    <citation type="journal article" date="2006" name="Acta Crystallogr. D">
        <title>Structures of the hydrolase domain of human 10-formyltetrahydrofolate dehydrogenase and its complex with a substrate analogue.</title>
        <authorList>
            <person name="Kursula P."/>
            <person name="Schuler H."/>
            <person name="Flodin S."/>
            <person name="Nilsson-Ehle P."/>
            <person name="Ogg D.J."/>
            <person name="Savitsky P."/>
            <person name="Nordlund P."/>
            <person name="Stenmark P."/>
        </authorList>
    </citation>
    <scope>X-RAY CRYSTALLOGRAPHY (1.7 ANGSTROMS) OF 1-307 IN COMPLEX WITH SUBSTRATE ANALOG</scope>
</reference>
<reference key="13">
    <citation type="journal article" date="2006" name="Science">
        <title>The consensus coding sequences of human breast and colorectal cancers.</title>
        <authorList>
            <person name="Sjoeblom T."/>
            <person name="Jones S."/>
            <person name="Wood L.D."/>
            <person name="Parsons D.W."/>
            <person name="Lin J."/>
            <person name="Barber T.D."/>
            <person name="Mandelker D."/>
            <person name="Leary R.J."/>
            <person name="Ptak J."/>
            <person name="Silliman N."/>
            <person name="Szabo S."/>
            <person name="Buckhaults P."/>
            <person name="Farrell C."/>
            <person name="Meeh P."/>
            <person name="Markowitz S.D."/>
            <person name="Willis J."/>
            <person name="Dawson D."/>
            <person name="Willson J.K.V."/>
            <person name="Gazdar A.F."/>
            <person name="Hartigan J."/>
            <person name="Wu L."/>
            <person name="Liu C."/>
            <person name="Parmigiani G."/>
            <person name="Park B.H."/>
            <person name="Bachman K.E."/>
            <person name="Papadopoulos N."/>
            <person name="Vogelstein B."/>
            <person name="Kinzler K.W."/>
            <person name="Velculescu V.E."/>
        </authorList>
    </citation>
    <scope>VARIANT [LARGE SCALE ANALYSIS] VAL-511</scope>
</reference>
<feature type="chain" id="PRO_0000199419" description="Cytosolic 10-formyltetrahydrofolate dehydrogenase">
    <location>
        <begin position="1"/>
        <end position="902"/>
    </location>
</feature>
<feature type="domain" description="Carrier" evidence="5">
    <location>
        <begin position="318"/>
        <end position="395"/>
    </location>
</feature>
<feature type="region of interest" description="Hydrolase domain" evidence="1">
    <location>
        <begin position="1"/>
        <end position="310"/>
    </location>
</feature>
<feature type="region of interest" description="Aldehyde dehydrogenase domain" evidence="1">
    <location>
        <begin position="417"/>
        <end position="902"/>
    </location>
</feature>
<feature type="active site" description="Proton donor" evidence="1">
    <location>
        <position position="106"/>
    </location>
</feature>
<feature type="active site" description="Proton acceptor" evidence="1">
    <location>
        <position position="673"/>
    </location>
</feature>
<feature type="active site" description="Proton donor" evidence="1">
    <location>
        <position position="707"/>
    </location>
</feature>
<feature type="binding site" evidence="15 19">
    <location>
        <begin position="88"/>
        <end position="90"/>
    </location>
    <ligand>
        <name>(6R)-10-formyltetrahydrofolate</name>
        <dbReference type="ChEBI" id="CHEBI:195366"/>
    </ligand>
</feature>
<feature type="binding site" evidence="15 19">
    <location>
        <position position="142"/>
    </location>
    <ligand>
        <name>(6R)-10-formyltetrahydrofolate</name>
        <dbReference type="ChEBI" id="CHEBI:195366"/>
    </ligand>
</feature>
<feature type="binding site" evidence="1">
    <location>
        <begin position="571"/>
        <end position="573"/>
    </location>
    <ligand>
        <name>NADP(+)</name>
        <dbReference type="ChEBI" id="CHEBI:58349"/>
    </ligand>
</feature>
<feature type="binding site" evidence="1">
    <location>
        <begin position="597"/>
        <end position="600"/>
    </location>
    <ligand>
        <name>NADP(+)</name>
        <dbReference type="ChEBI" id="CHEBI:58349"/>
    </ligand>
</feature>
<feature type="binding site" evidence="1">
    <location>
        <begin position="630"/>
        <end position="635"/>
    </location>
    <ligand>
        <name>NADP(+)</name>
        <dbReference type="ChEBI" id="CHEBI:58349"/>
    </ligand>
</feature>
<feature type="binding site" evidence="1">
    <location>
        <begin position="650"/>
        <end position="651"/>
    </location>
    <ligand>
        <name>NADP(+)</name>
        <dbReference type="ChEBI" id="CHEBI:58349"/>
    </ligand>
</feature>
<feature type="binding site" evidence="1">
    <location>
        <begin position="673"/>
        <end position="674"/>
    </location>
    <ligand>
        <name>NADP(+)</name>
        <dbReference type="ChEBI" id="CHEBI:58349"/>
    </ligand>
</feature>
<feature type="binding site" evidence="1">
    <location>
        <position position="757"/>
    </location>
    <ligand>
        <name>NADP(+)</name>
        <dbReference type="ChEBI" id="CHEBI:58349"/>
    </ligand>
</feature>
<feature type="binding site" evidence="1">
    <location>
        <begin position="804"/>
        <end position="806"/>
    </location>
    <ligand>
        <name>NADP(+)</name>
        <dbReference type="ChEBI" id="CHEBI:58349"/>
    </ligand>
</feature>
<feature type="site" description="Essential for catalytic activity" evidence="1">
    <location>
        <position position="142"/>
    </location>
</feature>
<feature type="modified residue" description="Phosphoserine" evidence="21">
    <location>
        <position position="9"/>
    </location>
</feature>
<feature type="modified residue" description="N6-succinyllysine" evidence="4">
    <location>
        <position position="38"/>
    </location>
</feature>
<feature type="modified residue" description="O-(pantetheine 4'-phosphoryl)serine" evidence="5 7">
    <location>
        <position position="354"/>
    </location>
</feature>
<feature type="modified residue" description="Phosphoserine" evidence="21">
    <location>
        <position position="629"/>
    </location>
</feature>
<feature type="modified residue" description="Phosphoserine" evidence="21">
    <location>
        <position position="631"/>
    </location>
</feature>
<feature type="modified residue" description="N6-succinyllysine" evidence="3">
    <location>
        <position position="660"/>
    </location>
</feature>
<feature type="modified residue" description="N6-succinyllysine" evidence="4">
    <location>
        <position position="767"/>
    </location>
</feature>
<feature type="modified residue" description="Phosphoserine" evidence="21">
    <location>
        <position position="825"/>
    </location>
</feature>
<feature type="modified residue" description="N6-acetyllysine" evidence="2">
    <location>
        <position position="882"/>
    </location>
</feature>
<feature type="splice variant" id="VSP_047260" description="In isoform 3." evidence="12">
    <original>M</original>
    <variation>MAGPSNPPATM</variation>
    <location>
        <position position="1"/>
    </location>
</feature>
<feature type="splice variant" id="VSP_045569" description="In isoform 2." evidence="10">
    <location>
        <begin position="118"/>
        <end position="218"/>
    </location>
</feature>
<feature type="splice variant" id="VSP_057429" description="In isoform 4." evidence="11">
    <original>LADLMEQHQEELAT</original>
    <variation>APPSPSTRPDPTAT</variation>
    <location>
        <begin position="492"/>
        <end position="505"/>
    </location>
</feature>
<feature type="splice variant" id="VSP_057430" description="In isoform 4." evidence="11">
    <location>
        <begin position="506"/>
        <end position="902"/>
    </location>
</feature>
<feature type="sequence variant" id="VAR_052290" description="In dbSNP:rs3796191.">
    <original>L</original>
    <variation>P</variation>
    <location>
        <position position="254"/>
    </location>
</feature>
<feature type="sequence variant" id="VAR_052291" description="In dbSNP:rs2886059.">
    <original>V</original>
    <variation>F</variation>
    <location>
        <position position="330"/>
    </location>
</feature>
<feature type="sequence variant" id="VAR_052292" description="In dbSNP:rs9282691.">
    <original>E</original>
    <variation>A</variation>
    <location>
        <position position="429"/>
    </location>
</feature>
<feature type="sequence variant" id="VAR_052293" description="In dbSNP:rs9282692.">
    <original>A</original>
    <variation>T</variation>
    <location>
        <position position="436"/>
    </location>
</feature>
<feature type="sequence variant" id="VAR_052295" description="In dbSNP:rs9282697.">
    <original>S</original>
    <variation>N</variation>
    <location>
        <position position="448"/>
    </location>
</feature>
<feature type="sequence variant" id="VAR_052296" description="In dbSNP:rs2276724.">
    <original>S</original>
    <variation>G</variation>
    <location>
        <position position="481"/>
    </location>
</feature>
<feature type="sequence variant" id="VAR_036101" description="In a colorectal cancer sample; somatic mutation; dbSNP:rs768309358." evidence="6">
    <original>A</original>
    <variation>V</variation>
    <location>
        <position position="511"/>
    </location>
</feature>
<feature type="sequence variant" id="VAR_052297" description="In dbSNP:rs1127717.">
    <original>D</original>
    <variation>G</variation>
    <location>
        <position position="793"/>
    </location>
</feature>
<feature type="sequence variant" id="VAR_052298" description="In dbSNP:rs9282689.">
    <original>E</original>
    <variation>K</variation>
    <location>
        <position position="803"/>
    </location>
</feature>
<feature type="sequence variant" id="VAR_052299" description="In dbSNP:rs4646750.">
    <original>I</original>
    <variation>V</variation>
    <location>
        <position position="812"/>
    </location>
</feature>
<feature type="mutagenesis site" description="Loss of phosphopantetheinylation by AASDHPPT. Loss of formyltetrahydrofolate dehydrogenase activity." evidence="7">
    <original>S</original>
    <variation>A</variation>
    <location>
        <position position="354"/>
    </location>
</feature>
<feature type="sequence conflict" description="In Ref. 1; AAC35000." evidence="14" ref="1">
    <original>G</original>
    <variation>A</variation>
    <location>
        <position position="63"/>
    </location>
</feature>
<feature type="sequence conflict" description="In Ref. 1; AAC35000." evidence="14" ref="1">
    <original>F</original>
    <variation>S</variation>
    <location>
        <position position="85"/>
    </location>
</feature>
<feature type="sequence conflict" description="In Ref. 1; AAC35000." evidence="14" ref="1">
    <original>M</original>
    <variation>V</variation>
    <location>
        <position position="176"/>
    </location>
</feature>
<feature type="sequence conflict" description="In Ref. 1; AAC35000." evidence="14" ref="1">
    <original>E</original>
    <variation>K</variation>
    <location>
        <position position="195"/>
    </location>
</feature>
<feature type="sequence conflict" description="In Ref. 1; AAC35000." evidence="14" ref="1">
    <original>D</original>
    <variation>G</variation>
    <location>
        <position position="470"/>
    </location>
</feature>
<feature type="sequence conflict" description="In Ref. 2; BAG57647." evidence="14" ref="2">
    <original>F</original>
    <variation>L</variation>
    <location>
        <position position="472"/>
    </location>
</feature>
<feature type="sequence conflict" description="In Ref. 1; AAC35000." evidence="14" ref="1">
    <original>K</original>
    <variation>E</variation>
    <location>
        <position position="677"/>
    </location>
</feature>
<feature type="sequence conflict" description="In Ref. 1; AAC35000." evidence="14" ref="1">
    <original>L</original>
    <variation>F</variation>
    <location>
        <position position="680"/>
    </location>
</feature>
<feature type="sequence conflict" description="In Ref. 1; AAC35000." evidence="14" ref="1">
    <original>N</original>
    <variation>S</variation>
    <location>
        <position position="702"/>
    </location>
</feature>
<feature type="strand" evidence="22">
    <location>
        <begin position="2"/>
        <end position="6"/>
    </location>
</feature>
<feature type="helix" evidence="22">
    <location>
        <begin position="9"/>
        <end position="21"/>
    </location>
</feature>
<feature type="strand" evidence="22">
    <location>
        <begin position="25"/>
        <end position="31"/>
    </location>
</feature>
<feature type="helix" evidence="22">
    <location>
        <begin position="41"/>
        <end position="49"/>
    </location>
</feature>
<feature type="strand" evidence="22">
    <location>
        <begin position="53"/>
        <end position="55"/>
    </location>
</feature>
<feature type="helix" evidence="22">
    <location>
        <begin position="67"/>
        <end position="74"/>
    </location>
</feature>
<feature type="strand" evidence="22">
    <location>
        <begin position="79"/>
        <end position="85"/>
    </location>
</feature>
<feature type="helix" evidence="22">
    <location>
        <begin position="92"/>
        <end position="95"/>
    </location>
</feature>
<feature type="strand" evidence="22">
    <location>
        <begin position="102"/>
        <end position="108"/>
    </location>
</feature>
<feature type="turn" evidence="22">
    <location>
        <begin position="110"/>
        <end position="113"/>
    </location>
</feature>
<feature type="strand" evidence="22">
    <location>
        <begin position="114"/>
        <end position="116"/>
    </location>
</feature>
<feature type="helix" evidence="22">
    <location>
        <begin position="118"/>
        <end position="124"/>
    </location>
</feature>
<feature type="strand" evidence="22">
    <location>
        <begin position="128"/>
        <end position="136"/>
    </location>
</feature>
<feature type="strand" evidence="22">
    <location>
        <begin position="139"/>
        <end position="142"/>
    </location>
</feature>
<feature type="strand" evidence="22">
    <location>
        <begin position="146"/>
        <end position="153"/>
    </location>
</feature>
<feature type="helix" evidence="22">
    <location>
        <begin position="160"/>
        <end position="166"/>
    </location>
</feature>
<feature type="turn" evidence="22">
    <location>
        <begin position="167"/>
        <end position="169"/>
    </location>
</feature>
<feature type="helix" evidence="22">
    <location>
        <begin position="170"/>
        <end position="185"/>
    </location>
</feature>
<feature type="helix" evidence="22">
    <location>
        <begin position="206"/>
        <end position="209"/>
    </location>
</feature>
<feature type="helix" evidence="22">
    <location>
        <begin position="217"/>
        <end position="225"/>
    </location>
</feature>
<feature type="turn" evidence="22">
    <location>
        <begin position="226"/>
        <end position="231"/>
    </location>
</feature>
<feature type="strand" evidence="22">
    <location>
        <begin position="234"/>
        <end position="237"/>
    </location>
</feature>
<feature type="strand" evidence="22">
    <location>
        <begin position="240"/>
        <end position="249"/>
    </location>
</feature>
<feature type="strand" evidence="22">
    <location>
        <begin position="258"/>
        <end position="261"/>
    </location>
</feature>
<feature type="strand" evidence="22">
    <location>
        <begin position="270"/>
        <end position="273"/>
    </location>
</feature>
<feature type="strand" evidence="22">
    <location>
        <begin position="276"/>
        <end position="280"/>
    </location>
</feature>
<feature type="strand" evidence="22">
    <location>
        <begin position="286"/>
        <end position="293"/>
    </location>
</feature>
<feature type="strand" evidence="22">
    <location>
        <begin position="299"/>
        <end position="301"/>
    </location>
</feature>
<feature type="helix" evidence="22">
    <location>
        <begin position="302"/>
        <end position="304"/>
    </location>
</feature>
<feature type="helix" evidence="23">
    <location>
        <begin position="320"/>
        <end position="334"/>
    </location>
</feature>
<feature type="helix" evidence="23">
    <location>
        <begin position="347"/>
        <end position="351"/>
    </location>
</feature>
<feature type="helix" evidence="23">
    <location>
        <begin position="356"/>
        <end position="367"/>
    </location>
</feature>
<feature type="helix" evidence="23">
    <location>
        <begin position="375"/>
        <end position="380"/>
    </location>
</feature>
<feature type="helix" evidence="23">
    <location>
        <begin position="384"/>
        <end position="397"/>
    </location>
</feature>
<accession>O75891</accession>
<accession>B4DG36</accession>
<accession>E9PBX3</accession>
<accession>Q68CS1</accession>
<accession>Q8TBP8</accession>
<proteinExistence type="evidence at protein level"/>
<organism>
    <name type="scientific">Homo sapiens</name>
    <name type="common">Human</name>
    <dbReference type="NCBI Taxonomy" id="9606"/>
    <lineage>
        <taxon>Eukaryota</taxon>
        <taxon>Metazoa</taxon>
        <taxon>Chordata</taxon>
        <taxon>Craniata</taxon>
        <taxon>Vertebrata</taxon>
        <taxon>Euteleostomi</taxon>
        <taxon>Mammalia</taxon>
        <taxon>Eutheria</taxon>
        <taxon>Euarchontoglires</taxon>
        <taxon>Primates</taxon>
        <taxon>Haplorrhini</taxon>
        <taxon>Catarrhini</taxon>
        <taxon>Hominidae</taxon>
        <taxon>Homo</taxon>
    </lineage>
</organism>
<protein>
    <recommendedName>
        <fullName evidence="16">Cytosolic 10-formyltetrahydrofolate dehydrogenase</fullName>
        <shortName>10-FTHFDH</shortName>
        <shortName evidence="13">FDH</shortName>
        <ecNumber evidence="7 9">1.5.1.6</ecNumber>
    </recommendedName>
    <alternativeName>
        <fullName evidence="17">Aldehyde dehydrogenase family 1 member L1</fullName>
    </alternativeName>
</protein>
<evidence type="ECO:0000250" key="1">
    <source>
        <dbReference type="UniProtKB" id="P28037"/>
    </source>
</evidence>
<evidence type="ECO:0000250" key="2">
    <source>
        <dbReference type="UniProtKB" id="Q3SY69"/>
    </source>
</evidence>
<evidence type="ECO:0000250" key="3">
    <source>
        <dbReference type="UniProtKB" id="Q8K009"/>
    </source>
</evidence>
<evidence type="ECO:0000250" key="4">
    <source>
        <dbReference type="UniProtKB" id="Q8R0Y6"/>
    </source>
</evidence>
<evidence type="ECO:0000255" key="5">
    <source>
        <dbReference type="PROSITE-ProRule" id="PRU00258"/>
    </source>
</evidence>
<evidence type="ECO:0000269" key="6">
    <source>
    </source>
</evidence>
<evidence type="ECO:0000269" key="7">
    <source>
    </source>
</evidence>
<evidence type="ECO:0000269" key="8">
    <source>
    </source>
</evidence>
<evidence type="ECO:0000269" key="9">
    <source>
    </source>
</evidence>
<evidence type="ECO:0000303" key="10">
    <source>
    </source>
</evidence>
<evidence type="ECO:0000303" key="11">
    <source>
    </source>
</evidence>
<evidence type="ECO:0000303" key="12">
    <source>
    </source>
</evidence>
<evidence type="ECO:0000303" key="13">
    <source>
    </source>
</evidence>
<evidence type="ECO:0000305" key="14"/>
<evidence type="ECO:0000305" key="15">
    <source>
    </source>
</evidence>
<evidence type="ECO:0000305" key="16">
    <source>
    </source>
</evidence>
<evidence type="ECO:0000312" key="17">
    <source>
        <dbReference type="HGNC" id="HGNC:3978"/>
    </source>
</evidence>
<evidence type="ECO:0007744" key="18">
    <source>
        <dbReference type="PDB" id="2BW0"/>
    </source>
</evidence>
<evidence type="ECO:0007744" key="19">
    <source>
        <dbReference type="PDB" id="2CFI"/>
    </source>
</evidence>
<evidence type="ECO:0007744" key="20">
    <source>
        <dbReference type="PDB" id="2CQ8"/>
    </source>
</evidence>
<evidence type="ECO:0007744" key="21">
    <source>
    </source>
</evidence>
<evidence type="ECO:0007829" key="22">
    <source>
        <dbReference type="PDB" id="2BW0"/>
    </source>
</evidence>
<evidence type="ECO:0007829" key="23">
    <source>
        <dbReference type="PDB" id="2CQ8"/>
    </source>
</evidence>
<sequence>MKIAVIGQSLFGQEVYCHLRKEGHEVVGVFTVPDKDGKADPLGLEAEKDGVPVFKYSRWRAKGQALPDVVAKYQALGAELNVLPFCSQFIPMEIISAPRHGSIIYHPSLLPRHRGASAINWTLIHGDKKGGFSIFWADDGLDTGDLLLQKECEVLPDDTVSTLYNRFLFPEGIKGMVQAVRLIAEGKAPRLPQPEEGATYEGIQKKETAKINWDQPAEAIHNWIRGNDKVPGAWTEACEQKLTFFNSTLNTSGLVPEGDALPIPGAHRPGVVTKAGLILFGNDDKMLLVKNIQLEDGKMILASNFFKGAASSVLELTEAELVTAEAVRSVWQRILPKVLEVEDSTDFFKSGAASVDVVRLVEEVKELCDGLELENEDVYMASTFGDFIQLLVRKLRGDDEEGECSIDYVEMAVNKRTVRMPHQLFIGGEFVDAEGAKTSETINPTDGSVICQVSLAQVTDVDKAVAAAKDAFENGRWGKISARDRGRLMYRLADLMEQHQEELATIEALDAGAVYTLALKTHVGMSIQTFRYFAGWCDKIQGSTIPINQARPNRNLTLTRKEPVGVCGIIIPWNYPLMMLSWKTAACLAAGNTVVIKPAQVTPLTALKFAELTLKAGIPKGVVNVLPGSGSLVGQRLSDHPDVRKIGFTGSTEVGKHIMKSCAISNVKKVSLELGGKSPLIIFADCDLNKAVQMGMSSVFFNKGENCIAAGRLFVEDSIHDEFVRRVVEEVRKMKVGNPLDRDTDHGPQNHHAHLVKLMEYCQHGVKEGATLVCGGNQVPRPGFFFEPTVFTDVEDHMFIAKEESFGPVMIISRFADGDLDAVLSRANATEFGLASGVFTRDINKALYVSDKLQAGTVFVNTYNKTDVAAPFGGFKQSGFGKDLGEAALNEYLRVKTVTFEY</sequence>
<keyword id="KW-0002">3D-structure</keyword>
<keyword id="KW-0007">Acetylation</keyword>
<keyword id="KW-0025">Alternative splicing</keyword>
<keyword id="KW-0963">Cytoplasm</keyword>
<keyword id="KW-0521">NADP</keyword>
<keyword id="KW-0554">One-carbon metabolism</keyword>
<keyword id="KW-0560">Oxidoreductase</keyword>
<keyword id="KW-0596">Phosphopantetheine</keyword>
<keyword id="KW-0597">Phosphoprotein</keyword>
<keyword id="KW-1267">Proteomics identification</keyword>
<keyword id="KW-1185">Reference proteome</keyword>
<comment type="function">
    <text evidence="1 7 9">Cytosolic 10-formyltetrahydrofolate dehydrogenase that catalyzes the NADP(+)-dependent conversion of 10-formyltetrahydrofolate to tetrahydrofolate and carbon dioxide (PubMed:19933275, PubMed:21238436). May also have an NADP(+)-dependent aldehyde dehydrogenase activity towards formaldehyde, acetaldehyde, propionaldehyde, and benzaldehyde (By similarity).</text>
</comment>
<comment type="catalytic activity">
    <reaction evidence="7 9">
        <text>(6R)-10-formyltetrahydrofolate + NADP(+) + H2O = (6S)-5,6,7,8-tetrahydrofolate + CO2 + NADPH + H(+)</text>
        <dbReference type="Rhea" id="RHEA:10180"/>
        <dbReference type="ChEBI" id="CHEBI:15377"/>
        <dbReference type="ChEBI" id="CHEBI:15378"/>
        <dbReference type="ChEBI" id="CHEBI:16526"/>
        <dbReference type="ChEBI" id="CHEBI:57453"/>
        <dbReference type="ChEBI" id="CHEBI:57783"/>
        <dbReference type="ChEBI" id="CHEBI:58349"/>
        <dbReference type="ChEBI" id="CHEBI:195366"/>
        <dbReference type="EC" id="1.5.1.6"/>
    </reaction>
    <physiologicalReaction direction="left-to-right" evidence="16">
        <dbReference type="Rhea" id="RHEA:10181"/>
    </physiologicalReaction>
</comment>
<comment type="subunit">
    <text evidence="1">Homotetramer.</text>
</comment>
<comment type="interaction">
    <interactant intactId="EBI-10714847">
        <id>O75891</id>
    </interactant>
    <interactant intactId="EBI-6916128">
        <id>Q3SY69</id>
        <label>ALDH1L2</label>
    </interactant>
    <organismsDiffer>false</organismsDiffer>
    <experiments>2</experiments>
</comment>
<comment type="interaction">
    <interactant intactId="EBI-12400198">
        <id>O75891-4</id>
    </interactant>
    <interactant intactId="EBI-743771">
        <id>Q92624</id>
        <label>APPBP2</label>
    </interactant>
    <organismsDiffer>false</organismsDiffer>
    <experiments>3</experiments>
</comment>
<comment type="subcellular location">
    <subcellularLocation>
        <location evidence="16">Cytoplasm</location>
        <location evidence="16">Cytosol</location>
    </subcellularLocation>
</comment>
<comment type="alternative products">
    <event type="alternative splicing"/>
    <isoform>
        <id>O75891-1</id>
        <name>1</name>
        <sequence type="displayed"/>
    </isoform>
    <isoform>
        <id>O75891-2</id>
        <name>2</name>
        <sequence type="described" ref="VSP_045569"/>
    </isoform>
    <isoform>
        <id>O75891-3</id>
        <name>3</name>
        <sequence type="described" ref="VSP_047260"/>
    </isoform>
    <isoform>
        <id>O75891-4</id>
        <name>4</name>
        <sequence type="described" ref="VSP_057429 VSP_057430"/>
    </isoform>
</comment>
<comment type="tissue specificity">
    <text evidence="8">Highly expressed in liver, pancreas and kidney.</text>
</comment>
<comment type="domain">
    <text evidence="1">The N-terminal hydrolase domain has an NADP-independent formyltetrahydrofolate hydrolase activity, releasing formate and tetrahydrofolate.</text>
</comment>
<comment type="domain">
    <text evidence="1">The C-terminal aldehyde dehydrogenase domain has an NADP-dependent dehydrogenase activity. It catalyzes the oxidation of formate, released by the hydrolysis of formyltetrahydrofolate, into CO2.</text>
</comment>
<comment type="domain">
    <text evidence="1">The carrier domain is phosphopantetheinylated and uses the 4'-phosphopantetheine/4'-PP swinging arm to transfer the formyl group released by the N-terminal formyltetrahydrofolate hydrolase activity to the C-terminal aldehyde dehydrogenase domain that catalyzes its NADP-dependent oxidation into CO2. The overall NADP-dependent physiological reaction requires the 3 domains (N-terminal hydrolase, C-terminal aldehyde dehydrogenase and carrier domains) to convert formyltetrahydrofolate into tetrahydrofolate and CO2.</text>
</comment>
<comment type="PTM">
    <text evidence="7">Phosphopantetheinylation at Ser-354 by AASDHPPT is required for the formyltetrahydrofolate dehydrogenase activity.</text>
</comment>
<comment type="similarity">
    <text evidence="14">In the N-terminal section; belongs to the GART family.</text>
</comment>
<comment type="similarity">
    <text evidence="14">In the C-terminal section; belongs to the aldehyde dehydrogenase family. ALDH1L subfamily.</text>
</comment>